<gene>
    <name evidence="1" type="primary">rimO</name>
    <name type="ordered locus">BMASAVP1_A1807</name>
</gene>
<organism>
    <name type="scientific">Burkholderia mallei (strain SAVP1)</name>
    <dbReference type="NCBI Taxonomy" id="320388"/>
    <lineage>
        <taxon>Bacteria</taxon>
        <taxon>Pseudomonadati</taxon>
        <taxon>Pseudomonadota</taxon>
        <taxon>Betaproteobacteria</taxon>
        <taxon>Burkholderiales</taxon>
        <taxon>Burkholderiaceae</taxon>
        <taxon>Burkholderia</taxon>
        <taxon>pseudomallei group</taxon>
    </lineage>
</organism>
<protein>
    <recommendedName>
        <fullName evidence="1">Ribosomal protein uS12 methylthiotransferase RimO</fullName>
        <shortName evidence="1">uS12 MTTase</shortName>
        <shortName evidence="1">uS12 methylthiotransferase</shortName>
        <ecNumber evidence="1">2.8.4.4</ecNumber>
    </recommendedName>
    <alternativeName>
        <fullName evidence="1">Ribosomal protein uS12 (aspartate-C(3))-methylthiotransferase</fullName>
    </alternativeName>
    <alternativeName>
        <fullName evidence="1">Ribosome maturation factor RimO</fullName>
    </alternativeName>
</protein>
<feature type="chain" id="PRO_0000374737" description="Ribosomal protein uS12 methylthiotransferase RimO">
    <location>
        <begin position="1"/>
        <end position="463"/>
    </location>
</feature>
<feature type="domain" description="MTTase N-terminal" evidence="1">
    <location>
        <begin position="15"/>
        <end position="130"/>
    </location>
</feature>
<feature type="domain" description="Radical SAM core" evidence="2">
    <location>
        <begin position="147"/>
        <end position="392"/>
    </location>
</feature>
<feature type="domain" description="TRAM" evidence="1">
    <location>
        <begin position="395"/>
        <end position="463"/>
    </location>
</feature>
<feature type="binding site" evidence="1">
    <location>
        <position position="24"/>
    </location>
    <ligand>
        <name>[4Fe-4S] cluster</name>
        <dbReference type="ChEBI" id="CHEBI:49883"/>
        <label>1</label>
    </ligand>
</feature>
<feature type="binding site" evidence="1">
    <location>
        <position position="60"/>
    </location>
    <ligand>
        <name>[4Fe-4S] cluster</name>
        <dbReference type="ChEBI" id="CHEBI:49883"/>
        <label>1</label>
    </ligand>
</feature>
<feature type="binding site" evidence="1">
    <location>
        <position position="89"/>
    </location>
    <ligand>
        <name>[4Fe-4S] cluster</name>
        <dbReference type="ChEBI" id="CHEBI:49883"/>
        <label>1</label>
    </ligand>
</feature>
<feature type="binding site" evidence="1">
    <location>
        <position position="161"/>
    </location>
    <ligand>
        <name>[4Fe-4S] cluster</name>
        <dbReference type="ChEBI" id="CHEBI:49883"/>
        <label>2</label>
        <note>4Fe-4S-S-AdoMet</note>
    </ligand>
</feature>
<feature type="binding site" evidence="1">
    <location>
        <position position="165"/>
    </location>
    <ligand>
        <name>[4Fe-4S] cluster</name>
        <dbReference type="ChEBI" id="CHEBI:49883"/>
        <label>2</label>
        <note>4Fe-4S-S-AdoMet</note>
    </ligand>
</feature>
<feature type="binding site" evidence="1">
    <location>
        <position position="168"/>
    </location>
    <ligand>
        <name>[4Fe-4S] cluster</name>
        <dbReference type="ChEBI" id="CHEBI:49883"/>
        <label>2</label>
        <note>4Fe-4S-S-AdoMet</note>
    </ligand>
</feature>
<evidence type="ECO:0000255" key="1">
    <source>
        <dbReference type="HAMAP-Rule" id="MF_01865"/>
    </source>
</evidence>
<evidence type="ECO:0000255" key="2">
    <source>
        <dbReference type="PROSITE-ProRule" id="PRU01266"/>
    </source>
</evidence>
<name>RIMO_BURMS</name>
<comment type="function">
    <text evidence="1">Catalyzes the methylthiolation of an aspartic acid residue of ribosomal protein uS12.</text>
</comment>
<comment type="catalytic activity">
    <reaction evidence="1">
        <text>L-aspartate(89)-[ribosomal protein uS12]-hydrogen + (sulfur carrier)-SH + AH2 + 2 S-adenosyl-L-methionine = 3-methylsulfanyl-L-aspartate(89)-[ribosomal protein uS12]-hydrogen + (sulfur carrier)-H + 5'-deoxyadenosine + L-methionine + A + S-adenosyl-L-homocysteine + 2 H(+)</text>
        <dbReference type="Rhea" id="RHEA:37087"/>
        <dbReference type="Rhea" id="RHEA-COMP:10460"/>
        <dbReference type="Rhea" id="RHEA-COMP:10461"/>
        <dbReference type="Rhea" id="RHEA-COMP:14737"/>
        <dbReference type="Rhea" id="RHEA-COMP:14739"/>
        <dbReference type="ChEBI" id="CHEBI:13193"/>
        <dbReference type="ChEBI" id="CHEBI:15378"/>
        <dbReference type="ChEBI" id="CHEBI:17319"/>
        <dbReference type="ChEBI" id="CHEBI:17499"/>
        <dbReference type="ChEBI" id="CHEBI:29917"/>
        <dbReference type="ChEBI" id="CHEBI:29961"/>
        <dbReference type="ChEBI" id="CHEBI:57844"/>
        <dbReference type="ChEBI" id="CHEBI:57856"/>
        <dbReference type="ChEBI" id="CHEBI:59789"/>
        <dbReference type="ChEBI" id="CHEBI:64428"/>
        <dbReference type="ChEBI" id="CHEBI:73599"/>
        <dbReference type="EC" id="2.8.4.4"/>
    </reaction>
</comment>
<comment type="cofactor">
    <cofactor evidence="1">
        <name>[4Fe-4S] cluster</name>
        <dbReference type="ChEBI" id="CHEBI:49883"/>
    </cofactor>
    <text evidence="1">Binds 2 [4Fe-4S] clusters. One cluster is coordinated with 3 cysteines and an exchangeable S-adenosyl-L-methionine.</text>
</comment>
<comment type="subcellular location">
    <subcellularLocation>
        <location evidence="1">Cytoplasm</location>
    </subcellularLocation>
</comment>
<comment type="similarity">
    <text evidence="1">Belongs to the methylthiotransferase family. RimO subfamily.</text>
</comment>
<accession>A1V4H3</accession>
<proteinExistence type="inferred from homology"/>
<dbReference type="EC" id="2.8.4.4" evidence="1"/>
<dbReference type="EMBL" id="CP000526">
    <property type="protein sequence ID" value="ABM51604.1"/>
    <property type="molecule type" value="Genomic_DNA"/>
</dbReference>
<dbReference type="RefSeq" id="WP_004193503.1">
    <property type="nucleotide sequence ID" value="NC_008785.1"/>
</dbReference>
<dbReference type="SMR" id="A1V4H3"/>
<dbReference type="GeneID" id="92979051"/>
<dbReference type="KEGG" id="bmv:BMASAVP1_A1807"/>
<dbReference type="HOGENOM" id="CLU_018697_0_0_4"/>
<dbReference type="GO" id="GO:0005829">
    <property type="term" value="C:cytosol"/>
    <property type="evidence" value="ECO:0007669"/>
    <property type="project" value="TreeGrafter"/>
</dbReference>
<dbReference type="GO" id="GO:0051539">
    <property type="term" value="F:4 iron, 4 sulfur cluster binding"/>
    <property type="evidence" value="ECO:0007669"/>
    <property type="project" value="UniProtKB-UniRule"/>
</dbReference>
<dbReference type="GO" id="GO:0035599">
    <property type="term" value="F:aspartic acid methylthiotransferase activity"/>
    <property type="evidence" value="ECO:0007669"/>
    <property type="project" value="TreeGrafter"/>
</dbReference>
<dbReference type="GO" id="GO:0046872">
    <property type="term" value="F:metal ion binding"/>
    <property type="evidence" value="ECO:0007669"/>
    <property type="project" value="UniProtKB-KW"/>
</dbReference>
<dbReference type="GO" id="GO:0103039">
    <property type="term" value="F:protein methylthiotransferase activity"/>
    <property type="evidence" value="ECO:0007669"/>
    <property type="project" value="UniProtKB-EC"/>
</dbReference>
<dbReference type="GO" id="GO:0006400">
    <property type="term" value="P:tRNA modification"/>
    <property type="evidence" value="ECO:0007669"/>
    <property type="project" value="InterPro"/>
</dbReference>
<dbReference type="CDD" id="cd01335">
    <property type="entry name" value="Radical_SAM"/>
    <property type="match status" value="1"/>
</dbReference>
<dbReference type="FunFam" id="3.40.50.12160:FF:000002">
    <property type="entry name" value="Ribosomal protein S12 methylthiotransferase RimO"/>
    <property type="match status" value="1"/>
</dbReference>
<dbReference type="FunFam" id="3.80.30.20:FF:000001">
    <property type="entry name" value="tRNA-2-methylthio-N(6)-dimethylallyladenosine synthase 2"/>
    <property type="match status" value="1"/>
</dbReference>
<dbReference type="Gene3D" id="3.40.50.12160">
    <property type="entry name" value="Methylthiotransferase, N-terminal domain"/>
    <property type="match status" value="1"/>
</dbReference>
<dbReference type="Gene3D" id="2.40.50.140">
    <property type="entry name" value="Nucleic acid-binding proteins"/>
    <property type="match status" value="1"/>
</dbReference>
<dbReference type="Gene3D" id="3.80.30.20">
    <property type="entry name" value="tm_1862 like domain"/>
    <property type="match status" value="1"/>
</dbReference>
<dbReference type="HAMAP" id="MF_01865">
    <property type="entry name" value="MTTase_RimO"/>
    <property type="match status" value="1"/>
</dbReference>
<dbReference type="InterPro" id="IPR006638">
    <property type="entry name" value="Elp3/MiaA/NifB-like_rSAM"/>
</dbReference>
<dbReference type="InterPro" id="IPR005839">
    <property type="entry name" value="Methylthiotransferase"/>
</dbReference>
<dbReference type="InterPro" id="IPR020612">
    <property type="entry name" value="Methylthiotransferase_CS"/>
</dbReference>
<dbReference type="InterPro" id="IPR013848">
    <property type="entry name" value="Methylthiotransferase_N"/>
</dbReference>
<dbReference type="InterPro" id="IPR038135">
    <property type="entry name" value="Methylthiotransferase_N_sf"/>
</dbReference>
<dbReference type="InterPro" id="IPR012340">
    <property type="entry name" value="NA-bd_OB-fold"/>
</dbReference>
<dbReference type="InterPro" id="IPR005840">
    <property type="entry name" value="Ribosomal_uS12_MeSTrfase_RimO"/>
</dbReference>
<dbReference type="InterPro" id="IPR007197">
    <property type="entry name" value="rSAM"/>
</dbReference>
<dbReference type="InterPro" id="IPR023404">
    <property type="entry name" value="rSAM_horseshoe"/>
</dbReference>
<dbReference type="InterPro" id="IPR002792">
    <property type="entry name" value="TRAM_dom"/>
</dbReference>
<dbReference type="NCBIfam" id="TIGR01125">
    <property type="entry name" value="30S ribosomal protein S12 methylthiotransferase RimO"/>
    <property type="match status" value="1"/>
</dbReference>
<dbReference type="NCBIfam" id="TIGR00089">
    <property type="entry name" value="MiaB/RimO family radical SAM methylthiotransferase"/>
    <property type="match status" value="1"/>
</dbReference>
<dbReference type="PANTHER" id="PTHR43837">
    <property type="entry name" value="RIBOSOMAL PROTEIN S12 METHYLTHIOTRANSFERASE RIMO"/>
    <property type="match status" value="1"/>
</dbReference>
<dbReference type="PANTHER" id="PTHR43837:SF1">
    <property type="entry name" value="RIBOSOMAL PROTEIN US12 METHYLTHIOTRANSFERASE RIMO"/>
    <property type="match status" value="1"/>
</dbReference>
<dbReference type="Pfam" id="PF04055">
    <property type="entry name" value="Radical_SAM"/>
    <property type="match status" value="1"/>
</dbReference>
<dbReference type="Pfam" id="PF18693">
    <property type="entry name" value="TRAM_2"/>
    <property type="match status" value="1"/>
</dbReference>
<dbReference type="Pfam" id="PF00919">
    <property type="entry name" value="UPF0004"/>
    <property type="match status" value="1"/>
</dbReference>
<dbReference type="SFLD" id="SFLDG01082">
    <property type="entry name" value="B12-binding_domain_containing"/>
    <property type="match status" value="1"/>
</dbReference>
<dbReference type="SFLD" id="SFLDS00029">
    <property type="entry name" value="Radical_SAM"/>
    <property type="match status" value="1"/>
</dbReference>
<dbReference type="SFLD" id="SFLDF00274">
    <property type="entry name" value="ribosomal_protein_S12_methylth"/>
    <property type="match status" value="1"/>
</dbReference>
<dbReference type="SMART" id="SM00729">
    <property type="entry name" value="Elp3"/>
    <property type="match status" value="1"/>
</dbReference>
<dbReference type="SUPFAM" id="SSF102114">
    <property type="entry name" value="Radical SAM enzymes"/>
    <property type="match status" value="1"/>
</dbReference>
<dbReference type="PROSITE" id="PS51449">
    <property type="entry name" value="MTTASE_N"/>
    <property type="match status" value="1"/>
</dbReference>
<dbReference type="PROSITE" id="PS01278">
    <property type="entry name" value="MTTASE_RADICAL"/>
    <property type="match status" value="1"/>
</dbReference>
<dbReference type="PROSITE" id="PS51918">
    <property type="entry name" value="RADICAL_SAM"/>
    <property type="match status" value="1"/>
</dbReference>
<dbReference type="PROSITE" id="PS50926">
    <property type="entry name" value="TRAM"/>
    <property type="match status" value="1"/>
</dbReference>
<keyword id="KW-0004">4Fe-4S</keyword>
<keyword id="KW-0963">Cytoplasm</keyword>
<keyword id="KW-0408">Iron</keyword>
<keyword id="KW-0411">Iron-sulfur</keyword>
<keyword id="KW-0479">Metal-binding</keyword>
<keyword id="KW-0949">S-adenosyl-L-methionine</keyword>
<keyword id="KW-0808">Transferase</keyword>
<reference key="1">
    <citation type="journal article" date="2010" name="Genome Biol. Evol.">
        <title>Continuing evolution of Burkholderia mallei through genome reduction and large-scale rearrangements.</title>
        <authorList>
            <person name="Losada L."/>
            <person name="Ronning C.M."/>
            <person name="DeShazer D."/>
            <person name="Woods D."/>
            <person name="Fedorova N."/>
            <person name="Kim H.S."/>
            <person name="Shabalina S.A."/>
            <person name="Pearson T.R."/>
            <person name="Brinkac L."/>
            <person name="Tan P."/>
            <person name="Nandi T."/>
            <person name="Crabtree J."/>
            <person name="Badger J."/>
            <person name="Beckstrom-Sternberg S."/>
            <person name="Saqib M."/>
            <person name="Schutzer S.E."/>
            <person name="Keim P."/>
            <person name="Nierman W.C."/>
        </authorList>
    </citation>
    <scope>NUCLEOTIDE SEQUENCE [LARGE SCALE GENOMIC DNA]</scope>
    <source>
        <strain>SAVP1</strain>
    </source>
</reference>
<sequence length="463" mass="50179">MENSLKSSGKPLAAPKVGMVSLGCPKALVDSEQIITQLRAEGYEISGTYDGADLVVVNTCGFIDEAVQESLDAIGEALAENGKVIVTGCLGAKKSASGSGLIAEVHPKVLAVTGPHAVGEVMQAVHSHLPKPHDPFVDLVPAAGIKLTPRHYAYLKISEGCNHRCSFCIIPSMRGELVSRPVAEVMLEAENLFKSGVKELLVISQDTSAYGVDVKYRTGFWNGRPLKTRMTELVGALGELAAQYGAWVRLHYVYPYPHVDEIIPMMAQGPLKGHVLPYLDVPFQHAHPEVLKRMKRLANAERVLERVQKWREICPDLTIRSTFIAGFPGETDAQFETLLDFIREAELDRVGCFAYSPVEGASANALDGALPDDVREARRARFMEVAEEVSAARIARKIGKTLKVLIDEVNAEGGIGRTAADAPEIDGVVYVEPAAKASKRYKVGEFVSVKITGADGHDLWGEV</sequence>